<protein>
    <recommendedName>
        <fullName evidence="1">Chaperone protein ClpB</fullName>
    </recommendedName>
</protein>
<dbReference type="EMBL" id="AE006468">
    <property type="protein sequence ID" value="AAL21550.1"/>
    <property type="molecule type" value="Genomic_DNA"/>
</dbReference>
<dbReference type="RefSeq" id="NP_461591.1">
    <property type="nucleotide sequence ID" value="NC_003197.2"/>
</dbReference>
<dbReference type="RefSeq" id="WP_001235094.1">
    <property type="nucleotide sequence ID" value="NC_003197.2"/>
</dbReference>
<dbReference type="SMR" id="Q7CQ01"/>
<dbReference type="STRING" id="99287.STM2660"/>
<dbReference type="PaxDb" id="99287-STM2660"/>
<dbReference type="GeneID" id="1254183"/>
<dbReference type="KEGG" id="stm:STM2660"/>
<dbReference type="PATRIC" id="fig|99287.12.peg.2806"/>
<dbReference type="HOGENOM" id="CLU_005070_4_2_6"/>
<dbReference type="OMA" id="VSKMMQG"/>
<dbReference type="PhylomeDB" id="Q7CQ01"/>
<dbReference type="BioCyc" id="SENT99287:STM2660-MONOMER"/>
<dbReference type="Proteomes" id="UP000001014">
    <property type="component" value="Chromosome"/>
</dbReference>
<dbReference type="GO" id="GO:0005737">
    <property type="term" value="C:cytoplasm"/>
    <property type="evidence" value="ECO:0000318"/>
    <property type="project" value="GO_Central"/>
</dbReference>
<dbReference type="GO" id="GO:0005524">
    <property type="term" value="F:ATP binding"/>
    <property type="evidence" value="ECO:0007669"/>
    <property type="project" value="UniProtKB-KW"/>
</dbReference>
<dbReference type="GO" id="GO:0016887">
    <property type="term" value="F:ATP hydrolysis activity"/>
    <property type="evidence" value="ECO:0000318"/>
    <property type="project" value="GO_Central"/>
</dbReference>
<dbReference type="GO" id="GO:0034605">
    <property type="term" value="P:cellular response to heat"/>
    <property type="evidence" value="ECO:0000318"/>
    <property type="project" value="GO_Central"/>
</dbReference>
<dbReference type="GO" id="GO:0042026">
    <property type="term" value="P:protein refolding"/>
    <property type="evidence" value="ECO:0007669"/>
    <property type="project" value="InterPro"/>
</dbReference>
<dbReference type="CDD" id="cd00009">
    <property type="entry name" value="AAA"/>
    <property type="match status" value="1"/>
</dbReference>
<dbReference type="CDD" id="cd19499">
    <property type="entry name" value="RecA-like_ClpB_Hsp104-like"/>
    <property type="match status" value="1"/>
</dbReference>
<dbReference type="FunFam" id="1.10.1780.10:FF:000003">
    <property type="entry name" value="ATP-dependent chaperone ClpB"/>
    <property type="match status" value="1"/>
</dbReference>
<dbReference type="FunFam" id="1.10.8.60:FF:000017">
    <property type="entry name" value="ATP-dependent chaperone ClpB"/>
    <property type="match status" value="1"/>
</dbReference>
<dbReference type="FunFam" id="3.40.50.300:FF:000120">
    <property type="entry name" value="ATP-dependent chaperone ClpB"/>
    <property type="match status" value="1"/>
</dbReference>
<dbReference type="FunFam" id="3.40.50.300:FF:000025">
    <property type="entry name" value="ATP-dependent Clp protease subunit"/>
    <property type="match status" value="1"/>
</dbReference>
<dbReference type="FunFam" id="3.40.50.300:FF:000010">
    <property type="entry name" value="Chaperone clpB 1, putative"/>
    <property type="match status" value="1"/>
</dbReference>
<dbReference type="Gene3D" id="1.10.8.60">
    <property type="match status" value="1"/>
</dbReference>
<dbReference type="Gene3D" id="1.10.1780.10">
    <property type="entry name" value="Clp, N-terminal domain"/>
    <property type="match status" value="1"/>
</dbReference>
<dbReference type="Gene3D" id="3.40.50.300">
    <property type="entry name" value="P-loop containing nucleotide triphosphate hydrolases"/>
    <property type="match status" value="3"/>
</dbReference>
<dbReference type="InterPro" id="IPR003593">
    <property type="entry name" value="AAA+_ATPase"/>
</dbReference>
<dbReference type="InterPro" id="IPR003959">
    <property type="entry name" value="ATPase_AAA_core"/>
</dbReference>
<dbReference type="InterPro" id="IPR017730">
    <property type="entry name" value="Chaperonin_ClpB"/>
</dbReference>
<dbReference type="InterPro" id="IPR019489">
    <property type="entry name" value="Clp_ATPase_C"/>
</dbReference>
<dbReference type="InterPro" id="IPR036628">
    <property type="entry name" value="Clp_N_dom_sf"/>
</dbReference>
<dbReference type="InterPro" id="IPR004176">
    <property type="entry name" value="Clp_R_dom"/>
</dbReference>
<dbReference type="InterPro" id="IPR001270">
    <property type="entry name" value="ClpA/B"/>
</dbReference>
<dbReference type="InterPro" id="IPR018368">
    <property type="entry name" value="ClpA/B_CS1"/>
</dbReference>
<dbReference type="InterPro" id="IPR028299">
    <property type="entry name" value="ClpA/B_CS2"/>
</dbReference>
<dbReference type="InterPro" id="IPR041546">
    <property type="entry name" value="ClpA/ClpB_AAA_lid"/>
</dbReference>
<dbReference type="InterPro" id="IPR050130">
    <property type="entry name" value="ClpA_ClpB"/>
</dbReference>
<dbReference type="InterPro" id="IPR027417">
    <property type="entry name" value="P-loop_NTPase"/>
</dbReference>
<dbReference type="NCBIfam" id="TIGR03346">
    <property type="entry name" value="chaperone_ClpB"/>
    <property type="match status" value="1"/>
</dbReference>
<dbReference type="NCBIfam" id="NF008118">
    <property type="entry name" value="PRK10865.1"/>
    <property type="match status" value="1"/>
</dbReference>
<dbReference type="PANTHER" id="PTHR11638">
    <property type="entry name" value="ATP-DEPENDENT CLP PROTEASE"/>
    <property type="match status" value="1"/>
</dbReference>
<dbReference type="PANTHER" id="PTHR11638:SF18">
    <property type="entry name" value="HEAT SHOCK PROTEIN 104"/>
    <property type="match status" value="1"/>
</dbReference>
<dbReference type="Pfam" id="PF00004">
    <property type="entry name" value="AAA"/>
    <property type="match status" value="1"/>
</dbReference>
<dbReference type="Pfam" id="PF07724">
    <property type="entry name" value="AAA_2"/>
    <property type="match status" value="1"/>
</dbReference>
<dbReference type="Pfam" id="PF17871">
    <property type="entry name" value="AAA_lid_9"/>
    <property type="match status" value="1"/>
</dbReference>
<dbReference type="Pfam" id="PF02861">
    <property type="entry name" value="Clp_N"/>
    <property type="match status" value="2"/>
</dbReference>
<dbReference type="Pfam" id="PF10431">
    <property type="entry name" value="ClpB_D2-small"/>
    <property type="match status" value="1"/>
</dbReference>
<dbReference type="PRINTS" id="PR00300">
    <property type="entry name" value="CLPPROTEASEA"/>
</dbReference>
<dbReference type="SMART" id="SM00382">
    <property type="entry name" value="AAA"/>
    <property type="match status" value="2"/>
</dbReference>
<dbReference type="SMART" id="SM01086">
    <property type="entry name" value="ClpB_D2-small"/>
    <property type="match status" value="1"/>
</dbReference>
<dbReference type="SUPFAM" id="SSF81923">
    <property type="entry name" value="Double Clp-N motif"/>
    <property type="match status" value="1"/>
</dbReference>
<dbReference type="SUPFAM" id="SSF52540">
    <property type="entry name" value="P-loop containing nucleoside triphosphate hydrolases"/>
    <property type="match status" value="2"/>
</dbReference>
<dbReference type="PROSITE" id="PS51903">
    <property type="entry name" value="CLP_R"/>
    <property type="match status" value="1"/>
</dbReference>
<dbReference type="PROSITE" id="PS00870">
    <property type="entry name" value="CLPAB_1"/>
    <property type="match status" value="1"/>
</dbReference>
<dbReference type="PROSITE" id="PS00871">
    <property type="entry name" value="CLPAB_2"/>
    <property type="match status" value="1"/>
</dbReference>
<reference key="1">
    <citation type="journal article" date="2001" name="Nature">
        <title>Complete genome sequence of Salmonella enterica serovar Typhimurium LT2.</title>
        <authorList>
            <person name="McClelland M."/>
            <person name="Sanderson K.E."/>
            <person name="Spieth J."/>
            <person name="Clifton S.W."/>
            <person name="Latreille P."/>
            <person name="Courtney L."/>
            <person name="Porwollik S."/>
            <person name="Ali J."/>
            <person name="Dante M."/>
            <person name="Du F."/>
            <person name="Hou S."/>
            <person name="Layman D."/>
            <person name="Leonard S."/>
            <person name="Nguyen C."/>
            <person name="Scott K."/>
            <person name="Holmes A."/>
            <person name="Grewal N."/>
            <person name="Mulvaney E."/>
            <person name="Ryan E."/>
            <person name="Sun H."/>
            <person name="Florea L."/>
            <person name="Miller W."/>
            <person name="Stoneking T."/>
            <person name="Nhan M."/>
            <person name="Waterston R."/>
            <person name="Wilson R.K."/>
        </authorList>
    </citation>
    <scope>NUCLEOTIDE SEQUENCE [LARGE SCALE GENOMIC DNA]</scope>
    <source>
        <strain>LT2 / SGSC1412 / ATCC 700720</strain>
    </source>
</reference>
<reference key="2">
    <citation type="journal article" date="1998" name="Infect. Immun.">
        <title>Identification of Salmonella typhimurium genes required for colonization of the chicken alimentary tract and for virulence in newly hatched chicks.</title>
        <authorList>
            <person name="Turner A.K."/>
            <person name="Lovell M.A."/>
            <person name="Hulme S.D."/>
            <person name="Zhang-Barber L."/>
            <person name="Barrow P.A."/>
        </authorList>
    </citation>
    <scope>INVOLVEMENT IN VIRULENCE</scope>
    <source>
        <strain>F98</strain>
    </source>
</reference>
<reference key="3">
    <citation type="journal article" date="2020" name="Cell Rep.">
        <title>The YdiU Domain Modulates Bacterial Stress Signaling through Mn2+-Dependent UMPylation.</title>
        <authorList>
            <person name="Yang Y."/>
            <person name="Yue Y."/>
            <person name="Song N."/>
            <person name="Li C."/>
            <person name="Yuan Z."/>
            <person name="Wang Y."/>
            <person name="Ma Y."/>
            <person name="Li H."/>
            <person name="Zhang F."/>
            <person name="Wang W."/>
            <person name="Jia H."/>
            <person name="Li P."/>
            <person name="Li X."/>
            <person name="Wang Q."/>
            <person name="Ding Z."/>
            <person name="Dong H."/>
            <person name="Gu L."/>
            <person name="Li B."/>
        </authorList>
    </citation>
    <scope>ACTIVITY REGULATION</scope>
    <scope>URIDYLYLATION</scope>
    <source>
        <strain>ATCC 14028 / SGSC 2980 / CDC 6516-60 / NCTC 12023</strain>
    </source>
</reference>
<evidence type="ECO:0000250" key="1">
    <source>
        <dbReference type="UniProtKB" id="P63284"/>
    </source>
</evidence>
<evidence type="ECO:0000255" key="2">
    <source>
        <dbReference type="PROSITE-ProRule" id="PRU01251"/>
    </source>
</evidence>
<evidence type="ECO:0000269" key="3">
    <source>
    </source>
</evidence>
<evidence type="ECO:0000269" key="4">
    <source>
    </source>
</evidence>
<evidence type="ECO:0000305" key="5"/>
<comment type="function">
    <text evidence="1 4">Part of a stress-induced multi-chaperone system, it is involved in the recovery of the cell from heat-induced damage, in cooperation with DnaK, DnaJ and GrpE. Acts before DnaK, in the processing of protein aggregates. Protein binding stimulates the ATPase activity; ATP hydrolysis unfolds the denatured protein aggregates, which probably helps expose new hydrophobic binding sites on the surface of ClpB-bound aggregates, contributing to the solubilization and refolding of denatured protein aggregates by DnaK (By similarity). Required for colonization of the gastrointestinal tract, probably due to protection from a combination of stress factors (PubMed:9573095).</text>
</comment>
<comment type="activity regulation">
    <text evidence="3">UMPylation of the chaperone by YdiU negatively regulates its activity, facilitating Salmonella survival under ATP-limited conditions.</text>
</comment>
<comment type="subunit">
    <text evidence="1">Homohexamer. The oligomerization is ATP-dependent.</text>
</comment>
<comment type="subcellular location">
    <subcellularLocation>
        <location evidence="5">Cytoplasm</location>
    </subcellularLocation>
</comment>
<comment type="domain">
    <text evidence="1">The Clp repeat (R) domain probably functions as a substrate-discriminating domain, recruiting aggregated proteins to the ClpB hexamer and/or stabilizing bound proteins. The NBD2 domain is responsible for oligomerization, whereas the NBD1 domain stabilizes the hexamer probably in an ATP-dependent manner. The movement of the coiled-coil domain is essential for ClpB ability to rescue proteins from an aggregated state, probably by pulling apart large aggregated proteins, which are bound between the coiled-coils motifs of adjacent ClpB subunits in the functional hexamer.</text>
</comment>
<comment type="PTM">
    <text evidence="3">UMPylated on a tyrosine residue by YdiU under ATP-limited conditions.</text>
</comment>
<comment type="similarity">
    <text evidence="5">Belongs to the ClpA/ClpB family.</text>
</comment>
<organism>
    <name type="scientific">Salmonella typhimurium (strain LT2 / SGSC1412 / ATCC 700720)</name>
    <dbReference type="NCBI Taxonomy" id="99287"/>
    <lineage>
        <taxon>Bacteria</taxon>
        <taxon>Pseudomonadati</taxon>
        <taxon>Pseudomonadota</taxon>
        <taxon>Gammaproteobacteria</taxon>
        <taxon>Enterobacterales</taxon>
        <taxon>Enterobacteriaceae</taxon>
        <taxon>Salmonella</taxon>
    </lineage>
</organism>
<accession>Q7CQ01</accession>
<name>CLPB_SALTY</name>
<sequence>MRLDRLTNKFQLALADAQSLALGHDNQFIEPLHLMSALLNQEGGSIRPLLTSAGINAGQLRTAIDQALSRLPQVEGTGGDVQPSSELVRVLNLCDKLAQKRGDNFISSELFVLAALESRGTLTDLLKSAGATTANITQAIEQMRGGESVNDQGAEDQRQALKKYTVDLTERAEQGKLDPVIGRDEEIRRTIQVLQRRTKNNPVLIGEPGVGKTAIVEGLAQRIINGEVPEGLKGRRVLALDMGALVAGAKYRGEFEERLKGVLNDLAKQEGNVILFIDELHTMVGAGKADGAMDAGNMLKPALARGELHCVGATTLDEYRQYIEKDAALERRFQKVFVAEPSVEDTIAILRGLKERYELHHHVQITDPAIVAAATLSHRYIADRQLPDKAIDLIDEAASSIRMQIDSKPEELDRLDRRIIQLKLEQQALMKESDEASKKRLDMLNEELDDKERQYSELEEEWKAEKASLSGTQTIKAELEQAKIAIEQARRVGDLARMSELQYGKIPELEKQLEAATQSEGKTMRLLRNKVTDAEIAEVLARWTGIPVSRMLEGEREKLLRMEQELHSRVIGQNEAVEAVSNAIRRSRAGLSDPNRPIGSFLFLGPTGVGKTELCKALANFMFDSDDAMVRIDMSEFMEKHSVSRLVGAPPGYVGYEEGGYLTEAVRRRPYSVILLDEVEKAHPDVFNILLQVLDDGRLTDGQGRTVDFRNTVVIMTSNLGSDLIQERFGELDYGRMKEMVLGVVSQNFRPEFINRIDEVVVFHPLGEQHIASIAQIQLQRLYKRLEERGYEIHISDEALKLLSANGYDPVYGARPLKRAIQQQIENPLAQQILSGELVPGKVIRLEANDDRIVAVQ</sequence>
<keyword id="KW-0067">ATP-binding</keyword>
<keyword id="KW-0143">Chaperone</keyword>
<keyword id="KW-0175">Coiled coil</keyword>
<keyword id="KW-0963">Cytoplasm</keyword>
<keyword id="KW-0547">Nucleotide-binding</keyword>
<keyword id="KW-1185">Reference proteome</keyword>
<keyword id="KW-0677">Repeat</keyword>
<keyword id="KW-0346">Stress response</keyword>
<proteinExistence type="inferred from homology"/>
<feature type="chain" id="PRO_0000191172" description="Chaperone protein ClpB">
    <location>
        <begin position="1"/>
        <end position="857"/>
    </location>
</feature>
<feature type="domain" description="Clp R" evidence="2">
    <location>
        <begin position="3"/>
        <end position="146"/>
    </location>
</feature>
<feature type="region of interest" description="Repeat 1" evidence="2">
    <location>
        <begin position="6"/>
        <end position="71"/>
    </location>
</feature>
<feature type="region of interest" description="Repeat 2" evidence="2">
    <location>
        <begin position="83"/>
        <end position="146"/>
    </location>
</feature>
<feature type="region of interest" description="NBD1" evidence="1">
    <location>
        <begin position="159"/>
        <end position="340"/>
    </location>
</feature>
<feature type="region of interest" description="Linker" evidence="1">
    <location>
        <begin position="341"/>
        <end position="545"/>
    </location>
</feature>
<feature type="region of interest" description="NBD2" evidence="1">
    <location>
        <begin position="555"/>
        <end position="765"/>
    </location>
</feature>
<feature type="region of interest" description="C-terminal" evidence="1">
    <location>
        <begin position="766"/>
        <end position="857"/>
    </location>
</feature>
<feature type="coiled-coil region" evidence="1">
    <location>
        <begin position="391"/>
        <end position="525"/>
    </location>
</feature>
<feature type="binding site" evidence="1">
    <location>
        <begin position="206"/>
        <end position="213"/>
    </location>
    <ligand>
        <name>ATP</name>
        <dbReference type="ChEBI" id="CHEBI:30616"/>
        <label>1</label>
    </ligand>
</feature>
<feature type="binding site" evidence="1">
    <location>
        <begin position="605"/>
        <end position="612"/>
    </location>
    <ligand>
        <name>ATP</name>
        <dbReference type="ChEBI" id="CHEBI:30616"/>
        <label>2</label>
    </ligand>
</feature>
<gene>
    <name type="primary">clpB</name>
    <name type="ordered locus">STM2660</name>
</gene>